<keyword id="KW-0275">Fatty acid biosynthesis</keyword>
<keyword id="KW-0276">Fatty acid metabolism</keyword>
<keyword id="KW-0444">Lipid biosynthesis</keyword>
<keyword id="KW-0443">Lipid metabolism</keyword>
<keyword id="KW-0520">NAD</keyword>
<keyword id="KW-0560">Oxidoreductase</keyword>
<protein>
    <recommendedName>
        <fullName evidence="1">Enoyl-[acyl-carrier-protein] reductase [NADH]</fullName>
        <shortName evidence="1">ENR</shortName>
        <ecNumber evidence="1">1.3.1.9</ecNumber>
    </recommendedName>
</protein>
<accession>Q1CCJ2</accession>
<accession>D1Q2Y1</accession>
<organism>
    <name type="scientific">Yersinia pestis bv. Antiqua (strain Nepal516)</name>
    <dbReference type="NCBI Taxonomy" id="377628"/>
    <lineage>
        <taxon>Bacteria</taxon>
        <taxon>Pseudomonadati</taxon>
        <taxon>Pseudomonadota</taxon>
        <taxon>Gammaproteobacteria</taxon>
        <taxon>Enterobacterales</taxon>
        <taxon>Yersiniaceae</taxon>
        <taxon>Yersinia</taxon>
    </lineage>
</organism>
<name>FABV_YERPN</name>
<feature type="chain" id="PRO_1000070510" description="Enoyl-[acyl-carrier-protein] reductase [NADH]">
    <location>
        <begin position="1"/>
        <end position="399"/>
    </location>
</feature>
<feature type="active site" description="Proton donor" evidence="1">
    <location>
        <position position="235"/>
    </location>
</feature>
<feature type="binding site" evidence="1">
    <location>
        <begin position="48"/>
        <end position="53"/>
    </location>
    <ligand>
        <name>NAD(+)</name>
        <dbReference type="ChEBI" id="CHEBI:57540"/>
    </ligand>
</feature>
<feature type="binding site" evidence="1">
    <location>
        <begin position="74"/>
        <end position="75"/>
    </location>
    <ligand>
        <name>NAD(+)</name>
        <dbReference type="ChEBI" id="CHEBI:57540"/>
    </ligand>
</feature>
<feature type="binding site" evidence="1">
    <location>
        <begin position="111"/>
        <end position="112"/>
    </location>
    <ligand>
        <name>NAD(+)</name>
        <dbReference type="ChEBI" id="CHEBI:57540"/>
    </ligand>
</feature>
<feature type="binding site" evidence="1">
    <location>
        <begin position="139"/>
        <end position="140"/>
    </location>
    <ligand>
        <name>NAD(+)</name>
        <dbReference type="ChEBI" id="CHEBI:57540"/>
    </ligand>
</feature>
<feature type="binding site" evidence="1">
    <location>
        <position position="225"/>
    </location>
    <ligand>
        <name>substrate</name>
    </ligand>
</feature>
<feature type="binding site" evidence="1">
    <location>
        <position position="244"/>
    </location>
    <ligand>
        <name>NAD(+)</name>
        <dbReference type="ChEBI" id="CHEBI:57540"/>
    </ligand>
</feature>
<feature type="binding site" evidence="1">
    <location>
        <begin position="274"/>
        <end position="276"/>
    </location>
    <ligand>
        <name>NAD(+)</name>
        <dbReference type="ChEBI" id="CHEBI:57540"/>
    </ligand>
</feature>
<feature type="site" description="Plays an important role in discriminating NADH against NADPH" evidence="1">
    <location>
        <position position="75"/>
    </location>
</feature>
<gene>
    <name evidence="1" type="primary">fabV</name>
    <name type="ordered locus">YPN_3961</name>
    <name type="ORF">YP516_4494</name>
</gene>
<sequence>MIIKPRVRGFICVTAHPTGCEANVKKQIDYVTTEGPIANGPKRVLVIGASTGYGLAARITAAFGCGADTLGVFFERPGEEGKPGTSGWYNSAAFHKFAAQKGLYAKSINGDAFSDEIKQLTIDAIKQDLGQVDQVIYSLASPRRTHPKTGEVFNSALKPIGNAVNLRGLDTDKEVIKESVLQPATQSEIDSTVAVMGGEDWQMWIDALLDAGVLAEGAQTTAFTYLGEKITHDIYWNGSIGAAKKDLDQKVLAIRESLAAHGGGDARVSVLKAVVTQASSAIPMMPLYLSLLFKVMKEKGTHEGCIEQVYSLYKDSLCGDSPHMDQEGRLRADYKELDPEVQNQVQQLWDQVTNDNIYQLTDFVGYKSEFLNLFGFGIDGVDYDADVNPDVKIPNLIQG</sequence>
<evidence type="ECO:0000255" key="1">
    <source>
        <dbReference type="HAMAP-Rule" id="MF_01838"/>
    </source>
</evidence>
<reference key="1">
    <citation type="journal article" date="2006" name="J. Bacteriol.">
        <title>Complete genome sequence of Yersinia pestis strains Antiqua and Nepal516: evidence of gene reduction in an emerging pathogen.</title>
        <authorList>
            <person name="Chain P.S.G."/>
            <person name="Hu P."/>
            <person name="Malfatti S.A."/>
            <person name="Radnedge L."/>
            <person name="Larimer F."/>
            <person name="Vergez L.M."/>
            <person name="Worsham P."/>
            <person name="Chu M.C."/>
            <person name="Andersen G.L."/>
        </authorList>
    </citation>
    <scope>NUCLEOTIDE SEQUENCE [LARGE SCALE GENOMIC DNA]</scope>
    <source>
        <strain>Nepal516</strain>
    </source>
</reference>
<reference key="2">
    <citation type="submission" date="2009-04" db="EMBL/GenBank/DDBJ databases">
        <title>Yersinia pestis Nepal516A whole genome shotgun sequencing project.</title>
        <authorList>
            <person name="Plunkett G. III"/>
            <person name="Anderson B.D."/>
            <person name="Baumler D.J."/>
            <person name="Burland V."/>
            <person name="Cabot E.L."/>
            <person name="Glasner J.D."/>
            <person name="Mau B."/>
            <person name="Neeno-Eckwall E."/>
            <person name="Perna N.T."/>
            <person name="Munk A.C."/>
            <person name="Tapia R."/>
            <person name="Green L.D."/>
            <person name="Rogers Y.C."/>
            <person name="Detter J.C."/>
            <person name="Bruce D.C."/>
            <person name="Brettin T.S."/>
        </authorList>
    </citation>
    <scope>NUCLEOTIDE SEQUENCE [LARGE SCALE GENOMIC DNA]</scope>
    <source>
        <strain>Nepal516</strain>
    </source>
</reference>
<proteinExistence type="inferred from homology"/>
<comment type="function">
    <text evidence="1">Involved in the final reduction of the elongation cycle of fatty acid synthesis (FAS II). Catalyzes the reduction of a carbon-carbon double bond in an enoyl moiety that is covalently linked to an acyl carrier protein (ACP).</text>
</comment>
<comment type="catalytic activity">
    <reaction evidence="1">
        <text>a 2,3-saturated acyl-[ACP] + NAD(+) = a (2E)-enoyl-[ACP] + NADH + H(+)</text>
        <dbReference type="Rhea" id="RHEA:10240"/>
        <dbReference type="Rhea" id="RHEA-COMP:9925"/>
        <dbReference type="Rhea" id="RHEA-COMP:9926"/>
        <dbReference type="ChEBI" id="CHEBI:15378"/>
        <dbReference type="ChEBI" id="CHEBI:57540"/>
        <dbReference type="ChEBI" id="CHEBI:57945"/>
        <dbReference type="ChEBI" id="CHEBI:78784"/>
        <dbReference type="ChEBI" id="CHEBI:78785"/>
        <dbReference type="EC" id="1.3.1.9"/>
    </reaction>
</comment>
<comment type="pathway">
    <text evidence="1">Lipid metabolism; fatty acid biosynthesis.</text>
</comment>
<comment type="subunit">
    <text evidence="1">Monomer.</text>
</comment>
<comment type="similarity">
    <text evidence="1">Belongs to the TER reductase family.</text>
</comment>
<dbReference type="EC" id="1.3.1.9" evidence="1"/>
<dbReference type="EMBL" id="CP000305">
    <property type="protein sequence ID" value="ABG20288.1"/>
    <property type="molecule type" value="Genomic_DNA"/>
</dbReference>
<dbReference type="EMBL" id="ACNQ01000019">
    <property type="protein sequence ID" value="EEO74884.1"/>
    <property type="molecule type" value="Genomic_DNA"/>
</dbReference>
<dbReference type="RefSeq" id="WP_002215588.1">
    <property type="nucleotide sequence ID" value="NZ_ACNQ01000019.1"/>
</dbReference>
<dbReference type="SMR" id="Q1CCJ2"/>
<dbReference type="GeneID" id="57974620"/>
<dbReference type="KEGG" id="ypn:YPN_3961"/>
<dbReference type="HOGENOM" id="CLU_057698_1_0_6"/>
<dbReference type="UniPathway" id="UPA00094"/>
<dbReference type="Proteomes" id="UP000008936">
    <property type="component" value="Chromosome"/>
</dbReference>
<dbReference type="GO" id="GO:0004318">
    <property type="term" value="F:enoyl-[acyl-carrier-protein] reductase (NADH) activity"/>
    <property type="evidence" value="ECO:0007669"/>
    <property type="project" value="UniProtKB-UniRule"/>
</dbReference>
<dbReference type="GO" id="GO:0051287">
    <property type="term" value="F:NAD binding"/>
    <property type="evidence" value="ECO:0007669"/>
    <property type="project" value="UniProtKB-UniRule"/>
</dbReference>
<dbReference type="GO" id="GO:0050343">
    <property type="term" value="F:trans-2-enoyl-CoA reductase (NADH) activity"/>
    <property type="evidence" value="ECO:0007669"/>
    <property type="project" value="TreeGrafter"/>
</dbReference>
<dbReference type="GO" id="GO:0006633">
    <property type="term" value="P:fatty acid biosynthetic process"/>
    <property type="evidence" value="ECO:0007669"/>
    <property type="project" value="UniProtKB-UniRule"/>
</dbReference>
<dbReference type="FunFam" id="3.40.50.720:FF:000221">
    <property type="entry name" value="Enoyl-[acyl-carrier-protein] reductase [NADH]"/>
    <property type="match status" value="1"/>
</dbReference>
<dbReference type="Gene3D" id="3.40.50.720">
    <property type="entry name" value="NAD(P)-binding Rossmann-like Domain"/>
    <property type="match status" value="1"/>
</dbReference>
<dbReference type="HAMAP" id="MF_01838">
    <property type="entry name" value="FabV_reductase"/>
    <property type="match status" value="1"/>
</dbReference>
<dbReference type="InterPro" id="IPR024906">
    <property type="entry name" value="Eno_Rdtase_FAD-bd_dom"/>
</dbReference>
<dbReference type="InterPro" id="IPR024910">
    <property type="entry name" value="Enoyl-CoA_Rdtase_cat_dom"/>
</dbReference>
<dbReference type="InterPro" id="IPR050048">
    <property type="entry name" value="FabV-like_NADH_b"/>
</dbReference>
<dbReference type="InterPro" id="IPR010758">
    <property type="entry name" value="Trans-2-enoyl-CoA_reductase"/>
</dbReference>
<dbReference type="NCBIfam" id="NF043048">
    <property type="entry name" value="EnoyACPredFabV"/>
    <property type="match status" value="1"/>
</dbReference>
<dbReference type="NCBIfam" id="NF010177">
    <property type="entry name" value="PRK13656.1"/>
    <property type="match status" value="1"/>
</dbReference>
<dbReference type="PANTHER" id="PTHR37480">
    <property type="entry name" value="ENOYL-[ACYL-CARRIER-PROTEIN] REDUCTASE [NADH]"/>
    <property type="match status" value="1"/>
</dbReference>
<dbReference type="PANTHER" id="PTHR37480:SF1">
    <property type="entry name" value="ENOYL-[ACYL-CARRIER-PROTEIN] REDUCTASE [NADH]"/>
    <property type="match status" value="1"/>
</dbReference>
<dbReference type="Pfam" id="PF07055">
    <property type="entry name" value="Eno-Rase_FAD_bd"/>
    <property type="match status" value="1"/>
</dbReference>
<dbReference type="Pfam" id="PF12242">
    <property type="entry name" value="Eno-Rase_NADH_b"/>
    <property type="match status" value="1"/>
</dbReference>
<dbReference type="Pfam" id="PF12241">
    <property type="entry name" value="Enoyl_reductase"/>
    <property type="match status" value="1"/>
</dbReference>